<proteinExistence type="inferred from homology"/>
<dbReference type="EMBL" id="BC090055">
    <property type="protein sequence ID" value="AAH90055.1"/>
    <property type="molecule type" value="mRNA"/>
</dbReference>
<dbReference type="RefSeq" id="NP_001165197.1">
    <property type="nucleotide sequence ID" value="NM_001171726.1"/>
</dbReference>
<dbReference type="DNASU" id="734313"/>
<dbReference type="GeneID" id="734313"/>
<dbReference type="KEGG" id="xla:734313"/>
<dbReference type="AGR" id="Xenbase:XB-GENE-6493981"/>
<dbReference type="CTD" id="734313"/>
<dbReference type="Xenbase" id="XB-GENE-6493981">
    <property type="gene designation" value="cdc42se2l.S"/>
</dbReference>
<dbReference type="OMA" id="NCCISPQ"/>
<dbReference type="OrthoDB" id="5559822at2759"/>
<dbReference type="Proteomes" id="UP000186698">
    <property type="component" value="Chromosome 1S"/>
</dbReference>
<dbReference type="Bgee" id="734313">
    <property type="expression patterns" value="Expressed in blastula and 19 other cell types or tissues"/>
</dbReference>
<dbReference type="GO" id="GO:0005737">
    <property type="term" value="C:cytoplasm"/>
    <property type="evidence" value="ECO:0007669"/>
    <property type="project" value="UniProtKB-KW"/>
</dbReference>
<dbReference type="GO" id="GO:0005856">
    <property type="term" value="C:cytoskeleton"/>
    <property type="evidence" value="ECO:0007669"/>
    <property type="project" value="UniProtKB-SubCell"/>
</dbReference>
<dbReference type="GO" id="GO:0005886">
    <property type="term" value="C:plasma membrane"/>
    <property type="evidence" value="ECO:0000250"/>
    <property type="project" value="UniProtKB"/>
</dbReference>
<dbReference type="GO" id="GO:0031267">
    <property type="term" value="F:small GTPase binding"/>
    <property type="evidence" value="ECO:0007669"/>
    <property type="project" value="InterPro"/>
</dbReference>
<dbReference type="GO" id="GO:0008360">
    <property type="term" value="P:regulation of cell shape"/>
    <property type="evidence" value="ECO:0007669"/>
    <property type="project" value="UniProtKB-KW"/>
</dbReference>
<dbReference type="GO" id="GO:0035023">
    <property type="term" value="P:regulation of Rho protein signal transduction"/>
    <property type="evidence" value="ECO:0007669"/>
    <property type="project" value="InterPro"/>
</dbReference>
<dbReference type="GO" id="GO:0009966">
    <property type="term" value="P:regulation of signal transduction"/>
    <property type="evidence" value="ECO:0000250"/>
    <property type="project" value="UniProtKB"/>
</dbReference>
<dbReference type="CDD" id="cd00132">
    <property type="entry name" value="CRIB"/>
    <property type="match status" value="1"/>
</dbReference>
<dbReference type="FunFam" id="3.90.810.10:FF:000004">
    <property type="entry name" value="CDC42 small effector protein 2"/>
    <property type="match status" value="1"/>
</dbReference>
<dbReference type="Gene3D" id="3.90.810.10">
    <property type="entry name" value="CRIB domain"/>
    <property type="match status" value="1"/>
</dbReference>
<dbReference type="InterPro" id="IPR000095">
    <property type="entry name" value="CRIB_dom"/>
</dbReference>
<dbReference type="InterPro" id="IPR036936">
    <property type="entry name" value="CRIB_dom_sf"/>
</dbReference>
<dbReference type="InterPro" id="IPR039056">
    <property type="entry name" value="SPEC"/>
</dbReference>
<dbReference type="PANTHER" id="PTHR13502:SF4">
    <property type="entry name" value="CDC42 SMALL EFFECTOR PROTEIN 2"/>
    <property type="match status" value="1"/>
</dbReference>
<dbReference type="PANTHER" id="PTHR13502">
    <property type="entry name" value="CDC42 SMALL EFFECTOR PROTEIN HOMOLOG"/>
    <property type="match status" value="1"/>
</dbReference>
<dbReference type="Pfam" id="PF00786">
    <property type="entry name" value="PBD"/>
    <property type="match status" value="1"/>
</dbReference>
<dbReference type="PROSITE" id="PS50108">
    <property type="entry name" value="CRIB"/>
    <property type="match status" value="1"/>
</dbReference>
<gene>
    <name type="primary">cdc42se2-a</name>
</gene>
<accession>Q5FVD7</accession>
<reference key="1">
    <citation type="submission" date="2005-02" db="EMBL/GenBank/DDBJ databases">
        <authorList>
            <consortium name="NIH - Xenopus Gene Collection (XGC) project"/>
        </authorList>
    </citation>
    <scope>NUCLEOTIDE SEQUENCE [LARGE SCALE MRNA]</scope>
    <source>
        <tissue>Embryo</tissue>
    </source>
</reference>
<organism>
    <name type="scientific">Xenopus laevis</name>
    <name type="common">African clawed frog</name>
    <dbReference type="NCBI Taxonomy" id="8355"/>
    <lineage>
        <taxon>Eukaryota</taxon>
        <taxon>Metazoa</taxon>
        <taxon>Chordata</taxon>
        <taxon>Craniata</taxon>
        <taxon>Vertebrata</taxon>
        <taxon>Euteleostomi</taxon>
        <taxon>Amphibia</taxon>
        <taxon>Batrachia</taxon>
        <taxon>Anura</taxon>
        <taxon>Pipoidea</taxon>
        <taxon>Pipidae</taxon>
        <taxon>Xenopodinae</taxon>
        <taxon>Xenopus</taxon>
        <taxon>Xenopus</taxon>
    </lineage>
</organism>
<sequence length="84" mass="9341">MSEFWLCFNCCIAEQPQPKRRRRIDRSMIGEPTNFVHTAHVGSGDLFSGMNSVSSIQNQMQSKGGYEGNISSNVQMQLVDTKAG</sequence>
<comment type="function">
    <text evidence="1">Probably involved in the organization of the actin cytoskeleton by acting downstream of CDC42, inducing actin filament assembly.</text>
</comment>
<comment type="subcellular location">
    <subcellularLocation>
        <location evidence="1">Cytoplasm</location>
        <location evidence="1">Cytoskeleton</location>
    </subcellularLocation>
    <subcellularLocation>
        <location evidence="1">Cell membrane</location>
        <topology evidence="1">Lipid-anchor</topology>
    </subcellularLocation>
</comment>
<comment type="similarity">
    <text evidence="3">Belongs to the CDC42SE/SPEC family.</text>
</comment>
<feature type="chain" id="PRO_0000334644" description="CDC42 small effector protein 2-A">
    <location>
        <begin position="1"/>
        <end position="84"/>
    </location>
</feature>
<feature type="domain" description="CRIB" evidence="2">
    <location>
        <begin position="29"/>
        <end position="42"/>
    </location>
</feature>
<feature type="lipid moiety-binding region" description="S-palmitoyl cysteine" evidence="1">
    <location>
        <position position="10"/>
    </location>
</feature>
<feature type="lipid moiety-binding region" description="S-palmitoyl cysteine" evidence="1">
    <location>
        <position position="11"/>
    </location>
</feature>
<evidence type="ECO:0000250" key="1"/>
<evidence type="ECO:0000255" key="2">
    <source>
        <dbReference type="PROSITE-ProRule" id="PRU00057"/>
    </source>
</evidence>
<evidence type="ECO:0000305" key="3"/>
<keyword id="KW-1003">Cell membrane</keyword>
<keyword id="KW-0133">Cell shape</keyword>
<keyword id="KW-0963">Cytoplasm</keyword>
<keyword id="KW-0206">Cytoskeleton</keyword>
<keyword id="KW-0449">Lipoprotein</keyword>
<keyword id="KW-0472">Membrane</keyword>
<keyword id="KW-0564">Palmitate</keyword>
<keyword id="KW-1185">Reference proteome</keyword>
<protein>
    <recommendedName>
        <fullName>CDC42 small effector protein 2-A</fullName>
    </recommendedName>
</protein>
<name>C4S2A_XENLA</name>